<keyword id="KW-0328">Glycosyltransferase</keyword>
<keyword id="KW-1185">Reference proteome</keyword>
<keyword id="KW-0808">Transferase</keyword>
<feature type="chain" id="PRO_0000080322" description="Uncharacterized glycosyltransferase MJ1069">
    <location>
        <begin position="1"/>
        <end position="392"/>
    </location>
</feature>
<proteinExistence type="inferred from homology"/>
<comment type="similarity">
    <text evidence="1">Belongs to the glycosyltransferase group 1 family. Glycosyltransferase 4 subfamily.</text>
</comment>
<protein>
    <recommendedName>
        <fullName>Uncharacterized glycosyltransferase MJ1069</fullName>
        <ecNumber>2.4.-.-</ecNumber>
    </recommendedName>
</protein>
<evidence type="ECO:0000305" key="1"/>
<accession>Q58469</accession>
<dbReference type="EC" id="2.4.-.-"/>
<dbReference type="EMBL" id="L77117">
    <property type="protein sequence ID" value="AAB99071.1"/>
    <property type="molecule type" value="Genomic_DNA"/>
</dbReference>
<dbReference type="PIR" id="D64433">
    <property type="entry name" value="D64433"/>
</dbReference>
<dbReference type="RefSeq" id="WP_010870581.1">
    <property type="nucleotide sequence ID" value="NC_000909.1"/>
</dbReference>
<dbReference type="SMR" id="Q58469"/>
<dbReference type="FunCoup" id="Q58469">
    <property type="interactions" value="5"/>
</dbReference>
<dbReference type="STRING" id="243232.MJ_1069"/>
<dbReference type="CAZy" id="GT4">
    <property type="family name" value="Glycosyltransferase Family 4"/>
</dbReference>
<dbReference type="PaxDb" id="243232-MJ_1069"/>
<dbReference type="DNASU" id="1451965"/>
<dbReference type="EnsemblBacteria" id="AAB99071">
    <property type="protein sequence ID" value="AAB99071"/>
    <property type="gene ID" value="MJ_1069"/>
</dbReference>
<dbReference type="GeneID" id="1451965"/>
<dbReference type="KEGG" id="mja:MJ_1069"/>
<dbReference type="eggNOG" id="arCOG01403">
    <property type="taxonomic scope" value="Archaea"/>
</dbReference>
<dbReference type="HOGENOM" id="CLU_009583_2_5_2"/>
<dbReference type="InParanoid" id="Q58469"/>
<dbReference type="OrthoDB" id="132546at2157"/>
<dbReference type="PhylomeDB" id="Q58469"/>
<dbReference type="Proteomes" id="UP000000805">
    <property type="component" value="Chromosome"/>
</dbReference>
<dbReference type="GO" id="GO:0016757">
    <property type="term" value="F:glycosyltransferase activity"/>
    <property type="evidence" value="ECO:0007669"/>
    <property type="project" value="UniProtKB-KW"/>
</dbReference>
<dbReference type="CDD" id="cd03801">
    <property type="entry name" value="GT4_PimA-like"/>
    <property type="match status" value="1"/>
</dbReference>
<dbReference type="Gene3D" id="3.40.50.2000">
    <property type="entry name" value="Glycogen Phosphorylase B"/>
    <property type="match status" value="2"/>
</dbReference>
<dbReference type="InterPro" id="IPR001296">
    <property type="entry name" value="Glyco_trans_1"/>
</dbReference>
<dbReference type="InterPro" id="IPR028098">
    <property type="entry name" value="Glyco_trans_4-like_N"/>
</dbReference>
<dbReference type="PANTHER" id="PTHR12526:SF634">
    <property type="entry name" value="BLL3361 PROTEIN"/>
    <property type="match status" value="1"/>
</dbReference>
<dbReference type="PANTHER" id="PTHR12526">
    <property type="entry name" value="GLYCOSYLTRANSFERASE"/>
    <property type="match status" value="1"/>
</dbReference>
<dbReference type="Pfam" id="PF13439">
    <property type="entry name" value="Glyco_transf_4"/>
    <property type="match status" value="1"/>
</dbReference>
<dbReference type="Pfam" id="PF00534">
    <property type="entry name" value="Glycos_transf_1"/>
    <property type="match status" value="1"/>
</dbReference>
<dbReference type="SUPFAM" id="SSF53756">
    <property type="entry name" value="UDP-Glycosyltransferase/glycogen phosphorylase"/>
    <property type="match status" value="1"/>
</dbReference>
<sequence length="392" mass="45820">MRKIKLIIFPGYYIPHIGGLETHVDEFTKHLSEDENYDIYIFAPNIPKYKEFEIRHNNVKVYRYPAFEIIPNYPVPNIFNIKFWRMFFNLYKIDFDIVMTRTRFFSNTLLGFIFAKLRFKKKKLIHVEHGSAFVKLESEFKNKLSYFYDKTIGKLIFKKADYVVAISKAVKNFILENFVNDKDIPIIYRGLEIEKIESIGEDKKIKEKFKNKIKLCFVGRLYKWKGVENIIKAYVDLPKDLKEKIILIVVGYGEDLERLKKLAGNYLNNGIYFTGKVDFEKAIAIVKASDIYIHSSYKGGGLSSSLLQAMCCGKAIVASPYEGADEVVIDGYNGILLKDNSPEEIKRGIIKLIENNNLRKIYGENAKNFIKENFNWKKSVKEYKKIFERLVN</sequence>
<reference key="1">
    <citation type="journal article" date="1996" name="Science">
        <title>Complete genome sequence of the methanogenic archaeon, Methanococcus jannaschii.</title>
        <authorList>
            <person name="Bult C.J."/>
            <person name="White O."/>
            <person name="Olsen G.J."/>
            <person name="Zhou L."/>
            <person name="Fleischmann R.D."/>
            <person name="Sutton G.G."/>
            <person name="Blake J.A."/>
            <person name="FitzGerald L.M."/>
            <person name="Clayton R.A."/>
            <person name="Gocayne J.D."/>
            <person name="Kerlavage A.R."/>
            <person name="Dougherty B.A."/>
            <person name="Tomb J.-F."/>
            <person name="Adams M.D."/>
            <person name="Reich C.I."/>
            <person name="Overbeek R."/>
            <person name="Kirkness E.F."/>
            <person name="Weinstock K.G."/>
            <person name="Merrick J.M."/>
            <person name="Glodek A."/>
            <person name="Scott J.L."/>
            <person name="Geoghagen N.S.M."/>
            <person name="Weidman J.F."/>
            <person name="Fuhrmann J.L."/>
            <person name="Nguyen D."/>
            <person name="Utterback T.R."/>
            <person name="Kelley J.M."/>
            <person name="Peterson J.D."/>
            <person name="Sadow P.W."/>
            <person name="Hanna M.C."/>
            <person name="Cotton M.D."/>
            <person name="Roberts K.M."/>
            <person name="Hurst M.A."/>
            <person name="Kaine B.P."/>
            <person name="Borodovsky M."/>
            <person name="Klenk H.-P."/>
            <person name="Fraser C.M."/>
            <person name="Smith H.O."/>
            <person name="Woese C.R."/>
            <person name="Venter J.C."/>
        </authorList>
    </citation>
    <scope>NUCLEOTIDE SEQUENCE [LARGE SCALE GENOMIC DNA]</scope>
    <source>
        <strain>ATCC 43067 / DSM 2661 / JAL-1 / JCM 10045 / NBRC 100440</strain>
    </source>
</reference>
<organism>
    <name type="scientific">Methanocaldococcus jannaschii (strain ATCC 43067 / DSM 2661 / JAL-1 / JCM 10045 / NBRC 100440)</name>
    <name type="common">Methanococcus jannaschii</name>
    <dbReference type="NCBI Taxonomy" id="243232"/>
    <lineage>
        <taxon>Archaea</taxon>
        <taxon>Methanobacteriati</taxon>
        <taxon>Methanobacteriota</taxon>
        <taxon>Methanomada group</taxon>
        <taxon>Methanococci</taxon>
        <taxon>Methanococcales</taxon>
        <taxon>Methanocaldococcaceae</taxon>
        <taxon>Methanocaldococcus</taxon>
    </lineage>
</organism>
<name>Y1069_METJA</name>
<gene>
    <name type="ordered locus">MJ1069</name>
</gene>